<organism>
    <name type="scientific">Alkaliphilus metalliredigens (strain QYMF)</name>
    <dbReference type="NCBI Taxonomy" id="293826"/>
    <lineage>
        <taxon>Bacteria</taxon>
        <taxon>Bacillati</taxon>
        <taxon>Bacillota</taxon>
        <taxon>Clostridia</taxon>
        <taxon>Peptostreptococcales</taxon>
        <taxon>Natronincolaceae</taxon>
        <taxon>Alkaliphilus</taxon>
    </lineage>
</organism>
<dbReference type="EC" id="2.7.4.22" evidence="1"/>
<dbReference type="EMBL" id="CP000724">
    <property type="protein sequence ID" value="ABR48839.1"/>
    <property type="molecule type" value="Genomic_DNA"/>
</dbReference>
<dbReference type="RefSeq" id="WP_012063812.1">
    <property type="nucleotide sequence ID" value="NC_009633.1"/>
</dbReference>
<dbReference type="SMR" id="A6TRM1"/>
<dbReference type="STRING" id="293826.Amet_2687"/>
<dbReference type="KEGG" id="amt:Amet_2687"/>
<dbReference type="eggNOG" id="COG0528">
    <property type="taxonomic scope" value="Bacteria"/>
</dbReference>
<dbReference type="HOGENOM" id="CLU_033861_0_0_9"/>
<dbReference type="OrthoDB" id="9807458at2"/>
<dbReference type="UniPathway" id="UPA00159">
    <property type="reaction ID" value="UER00275"/>
</dbReference>
<dbReference type="Proteomes" id="UP000001572">
    <property type="component" value="Chromosome"/>
</dbReference>
<dbReference type="GO" id="GO:0005737">
    <property type="term" value="C:cytoplasm"/>
    <property type="evidence" value="ECO:0007669"/>
    <property type="project" value="UniProtKB-SubCell"/>
</dbReference>
<dbReference type="GO" id="GO:0005524">
    <property type="term" value="F:ATP binding"/>
    <property type="evidence" value="ECO:0007669"/>
    <property type="project" value="UniProtKB-KW"/>
</dbReference>
<dbReference type="GO" id="GO:0033862">
    <property type="term" value="F:UMP kinase activity"/>
    <property type="evidence" value="ECO:0007669"/>
    <property type="project" value="UniProtKB-EC"/>
</dbReference>
<dbReference type="GO" id="GO:0044210">
    <property type="term" value="P:'de novo' CTP biosynthetic process"/>
    <property type="evidence" value="ECO:0007669"/>
    <property type="project" value="UniProtKB-UniRule"/>
</dbReference>
<dbReference type="GO" id="GO:0006225">
    <property type="term" value="P:UDP biosynthetic process"/>
    <property type="evidence" value="ECO:0007669"/>
    <property type="project" value="TreeGrafter"/>
</dbReference>
<dbReference type="CDD" id="cd04254">
    <property type="entry name" value="AAK_UMPK-PyrH-Ec"/>
    <property type="match status" value="1"/>
</dbReference>
<dbReference type="FunFam" id="3.40.1160.10:FF:000001">
    <property type="entry name" value="Uridylate kinase"/>
    <property type="match status" value="1"/>
</dbReference>
<dbReference type="Gene3D" id="3.40.1160.10">
    <property type="entry name" value="Acetylglutamate kinase-like"/>
    <property type="match status" value="1"/>
</dbReference>
<dbReference type="HAMAP" id="MF_01220_B">
    <property type="entry name" value="PyrH_B"/>
    <property type="match status" value="1"/>
</dbReference>
<dbReference type="InterPro" id="IPR036393">
    <property type="entry name" value="AceGlu_kinase-like_sf"/>
</dbReference>
<dbReference type="InterPro" id="IPR001048">
    <property type="entry name" value="Asp/Glu/Uridylate_kinase"/>
</dbReference>
<dbReference type="InterPro" id="IPR011817">
    <property type="entry name" value="Uridylate_kinase"/>
</dbReference>
<dbReference type="InterPro" id="IPR015963">
    <property type="entry name" value="Uridylate_kinase_bac"/>
</dbReference>
<dbReference type="NCBIfam" id="TIGR02075">
    <property type="entry name" value="pyrH_bact"/>
    <property type="match status" value="1"/>
</dbReference>
<dbReference type="PANTHER" id="PTHR42833">
    <property type="entry name" value="URIDYLATE KINASE"/>
    <property type="match status" value="1"/>
</dbReference>
<dbReference type="PANTHER" id="PTHR42833:SF4">
    <property type="entry name" value="URIDYLATE KINASE PUMPKIN, CHLOROPLASTIC"/>
    <property type="match status" value="1"/>
</dbReference>
<dbReference type="Pfam" id="PF00696">
    <property type="entry name" value="AA_kinase"/>
    <property type="match status" value="1"/>
</dbReference>
<dbReference type="PIRSF" id="PIRSF005650">
    <property type="entry name" value="Uridylate_kin"/>
    <property type="match status" value="1"/>
</dbReference>
<dbReference type="SUPFAM" id="SSF53633">
    <property type="entry name" value="Carbamate kinase-like"/>
    <property type="match status" value="1"/>
</dbReference>
<proteinExistence type="inferred from homology"/>
<name>PYRH_ALKMQ</name>
<keyword id="KW-0021">Allosteric enzyme</keyword>
<keyword id="KW-0067">ATP-binding</keyword>
<keyword id="KW-0963">Cytoplasm</keyword>
<keyword id="KW-0418">Kinase</keyword>
<keyword id="KW-0547">Nucleotide-binding</keyword>
<keyword id="KW-0665">Pyrimidine biosynthesis</keyword>
<keyword id="KW-1185">Reference proteome</keyword>
<keyword id="KW-0808">Transferase</keyword>
<accession>A6TRM1</accession>
<evidence type="ECO:0000255" key="1">
    <source>
        <dbReference type="HAMAP-Rule" id="MF_01220"/>
    </source>
</evidence>
<reference key="1">
    <citation type="journal article" date="2016" name="Genome Announc.">
        <title>Complete genome sequence of Alkaliphilus metalliredigens strain QYMF, an alkaliphilic and metal-reducing bacterium isolated from borax-contaminated leachate ponds.</title>
        <authorList>
            <person name="Hwang C."/>
            <person name="Copeland A."/>
            <person name="Lucas S."/>
            <person name="Lapidus A."/>
            <person name="Barry K."/>
            <person name="Detter J.C."/>
            <person name="Glavina Del Rio T."/>
            <person name="Hammon N."/>
            <person name="Israni S."/>
            <person name="Dalin E."/>
            <person name="Tice H."/>
            <person name="Pitluck S."/>
            <person name="Chertkov O."/>
            <person name="Brettin T."/>
            <person name="Bruce D."/>
            <person name="Han C."/>
            <person name="Schmutz J."/>
            <person name="Larimer F."/>
            <person name="Land M.L."/>
            <person name="Hauser L."/>
            <person name="Kyrpides N."/>
            <person name="Mikhailova N."/>
            <person name="Ye Q."/>
            <person name="Zhou J."/>
            <person name="Richardson P."/>
            <person name="Fields M.W."/>
        </authorList>
    </citation>
    <scope>NUCLEOTIDE SEQUENCE [LARGE SCALE GENOMIC DNA]</scope>
    <source>
        <strain>QYMF</strain>
    </source>
</reference>
<protein>
    <recommendedName>
        <fullName evidence="1">Uridylate kinase</fullName>
        <shortName evidence="1">UK</shortName>
        <ecNumber evidence="1">2.7.4.22</ecNumber>
    </recommendedName>
    <alternativeName>
        <fullName evidence="1">Uridine monophosphate kinase</fullName>
        <shortName evidence="1">UMP kinase</shortName>
        <shortName evidence="1">UMPK</shortName>
    </alternativeName>
</protein>
<comment type="function">
    <text evidence="1">Catalyzes the reversible phosphorylation of UMP to UDP.</text>
</comment>
<comment type="catalytic activity">
    <reaction evidence="1">
        <text>UMP + ATP = UDP + ADP</text>
        <dbReference type="Rhea" id="RHEA:24400"/>
        <dbReference type="ChEBI" id="CHEBI:30616"/>
        <dbReference type="ChEBI" id="CHEBI:57865"/>
        <dbReference type="ChEBI" id="CHEBI:58223"/>
        <dbReference type="ChEBI" id="CHEBI:456216"/>
        <dbReference type="EC" id="2.7.4.22"/>
    </reaction>
</comment>
<comment type="activity regulation">
    <text evidence="1">Allosterically activated by GTP. Inhibited by UTP.</text>
</comment>
<comment type="pathway">
    <text evidence="1">Pyrimidine metabolism; CTP biosynthesis via de novo pathway; UDP from UMP (UMPK route): step 1/1.</text>
</comment>
<comment type="subunit">
    <text evidence="1">Homohexamer.</text>
</comment>
<comment type="subcellular location">
    <subcellularLocation>
        <location evidence="1">Cytoplasm</location>
    </subcellularLocation>
</comment>
<comment type="similarity">
    <text evidence="1">Belongs to the UMP kinase family.</text>
</comment>
<sequence length="236" mass="25912">MAKPLYKRVLLKLSGEALAGEKGFGLDTDTINDIAHQISEITDMGVQVAIVVGGGNFWRGRTGEGMDRTTADYMGMMATVINALALQDALENIEILTRVQTAIEMRQIAEPYIRRRAVRHLEKNRVVIFAAGTGNPYFSTDTTAALRAAEIEAEVILLAKNVDGVYDSDPNINPNAQKLQELTYLDVLQQGLKVMDSTATSLCMDNKIPIKVFGLKQSQNIKKVILGEKIGTHIYS</sequence>
<gene>
    <name evidence="1" type="primary">pyrH</name>
    <name type="ordered locus">Amet_2687</name>
</gene>
<feature type="chain" id="PRO_1000066736" description="Uridylate kinase">
    <location>
        <begin position="1"/>
        <end position="236"/>
    </location>
</feature>
<feature type="region of interest" description="Involved in allosteric activation by GTP" evidence="1">
    <location>
        <begin position="20"/>
        <end position="25"/>
    </location>
</feature>
<feature type="binding site" evidence="1">
    <location>
        <begin position="12"/>
        <end position="15"/>
    </location>
    <ligand>
        <name>ATP</name>
        <dbReference type="ChEBI" id="CHEBI:30616"/>
    </ligand>
</feature>
<feature type="binding site" evidence="1">
    <location>
        <position position="54"/>
    </location>
    <ligand>
        <name>UMP</name>
        <dbReference type="ChEBI" id="CHEBI:57865"/>
    </ligand>
</feature>
<feature type="binding site" evidence="1">
    <location>
        <position position="55"/>
    </location>
    <ligand>
        <name>ATP</name>
        <dbReference type="ChEBI" id="CHEBI:30616"/>
    </ligand>
</feature>
<feature type="binding site" evidence="1">
    <location>
        <position position="59"/>
    </location>
    <ligand>
        <name>ATP</name>
        <dbReference type="ChEBI" id="CHEBI:30616"/>
    </ligand>
</feature>
<feature type="binding site" evidence="1">
    <location>
        <position position="72"/>
    </location>
    <ligand>
        <name>UMP</name>
        <dbReference type="ChEBI" id="CHEBI:57865"/>
    </ligand>
</feature>
<feature type="binding site" evidence="1">
    <location>
        <begin position="133"/>
        <end position="140"/>
    </location>
    <ligand>
        <name>UMP</name>
        <dbReference type="ChEBI" id="CHEBI:57865"/>
    </ligand>
</feature>
<feature type="binding site" evidence="1">
    <location>
        <position position="161"/>
    </location>
    <ligand>
        <name>ATP</name>
        <dbReference type="ChEBI" id="CHEBI:30616"/>
    </ligand>
</feature>
<feature type="binding site" evidence="1">
    <location>
        <position position="166"/>
    </location>
    <ligand>
        <name>ATP</name>
        <dbReference type="ChEBI" id="CHEBI:30616"/>
    </ligand>
</feature>
<feature type="binding site" evidence="1">
    <location>
        <position position="169"/>
    </location>
    <ligand>
        <name>ATP</name>
        <dbReference type="ChEBI" id="CHEBI:30616"/>
    </ligand>
</feature>